<protein>
    <recommendedName>
        <fullName evidence="1">Cytochrome c-type biogenesis protein CcmE</fullName>
    </recommendedName>
    <alternativeName>
        <fullName evidence="1">Cytochrome c maturation protein E</fullName>
    </alternativeName>
    <alternativeName>
        <fullName evidence="1">Heme chaperone CcmE</fullName>
    </alternativeName>
</protein>
<feature type="chain" id="PRO_0000238851" description="Cytochrome c-type biogenesis protein CcmE">
    <location>
        <begin position="1"/>
        <end position="150"/>
    </location>
</feature>
<feature type="topological domain" description="Cytoplasmic" evidence="1">
    <location>
        <begin position="1"/>
        <end position="9"/>
    </location>
</feature>
<feature type="transmembrane region" description="Helical; Signal-anchor for type II membrane protein" evidence="1">
    <location>
        <begin position="10"/>
        <end position="30"/>
    </location>
</feature>
<feature type="topological domain" description="Periplasmic" evidence="1">
    <location>
        <begin position="31"/>
        <end position="150"/>
    </location>
</feature>
<feature type="binding site" description="covalent" evidence="1">
    <location>
        <position position="123"/>
    </location>
    <ligand>
        <name>heme</name>
        <dbReference type="ChEBI" id="CHEBI:30413"/>
    </ligand>
</feature>
<feature type="binding site" description="axial binding residue" evidence="1">
    <location>
        <position position="127"/>
    </location>
    <ligand>
        <name>heme</name>
        <dbReference type="ChEBI" id="CHEBI:30413"/>
    </ligand>
    <ligandPart>
        <name>Fe</name>
        <dbReference type="ChEBI" id="CHEBI:18248"/>
    </ligandPart>
</feature>
<feature type="mutagenesis site" description="Loss of function." evidence="2">
    <original>H</original>
    <variation>A</variation>
    <location>
        <position position="123"/>
    </location>
</feature>
<accession>Q9LA01</accession>
<accession>D5ANG5</accession>
<organism>
    <name type="scientific">Rhodobacter capsulatus (strain ATCC BAA-309 / NBRC 16581 / SB1003)</name>
    <dbReference type="NCBI Taxonomy" id="272942"/>
    <lineage>
        <taxon>Bacteria</taxon>
        <taxon>Pseudomonadati</taxon>
        <taxon>Pseudomonadota</taxon>
        <taxon>Alphaproteobacteria</taxon>
        <taxon>Rhodobacterales</taxon>
        <taxon>Rhodobacter group</taxon>
        <taxon>Rhodobacter</taxon>
    </lineage>
</organism>
<name>CCME_RHOCB</name>
<dbReference type="EMBL" id="AF156104">
    <property type="protein sequence ID" value="AAF26221.1"/>
    <property type="molecule type" value="Genomic_DNA"/>
</dbReference>
<dbReference type="EMBL" id="CP001312">
    <property type="protein sequence ID" value="ADE84319.1"/>
    <property type="molecule type" value="Genomic_DNA"/>
</dbReference>
<dbReference type="RefSeq" id="WP_013066298.1">
    <property type="nucleotide sequence ID" value="NC_014034.1"/>
</dbReference>
<dbReference type="SMR" id="Q9LA01"/>
<dbReference type="STRING" id="272942.RCAP_rcc00554"/>
<dbReference type="GeneID" id="31489505"/>
<dbReference type="KEGG" id="rcp:RCAP_rcc00554"/>
<dbReference type="eggNOG" id="COG2332">
    <property type="taxonomic scope" value="Bacteria"/>
</dbReference>
<dbReference type="HOGENOM" id="CLU_079503_1_1_5"/>
<dbReference type="OrthoDB" id="9793584at2"/>
<dbReference type="Proteomes" id="UP000002361">
    <property type="component" value="Chromosome"/>
</dbReference>
<dbReference type="GO" id="GO:0005886">
    <property type="term" value="C:plasma membrane"/>
    <property type="evidence" value="ECO:0007669"/>
    <property type="project" value="UniProtKB-SubCell"/>
</dbReference>
<dbReference type="GO" id="GO:0020037">
    <property type="term" value="F:heme binding"/>
    <property type="evidence" value="ECO:0007669"/>
    <property type="project" value="InterPro"/>
</dbReference>
<dbReference type="GO" id="GO:0046872">
    <property type="term" value="F:metal ion binding"/>
    <property type="evidence" value="ECO:0007669"/>
    <property type="project" value="UniProtKB-KW"/>
</dbReference>
<dbReference type="GO" id="GO:0017004">
    <property type="term" value="P:cytochrome complex assembly"/>
    <property type="evidence" value="ECO:0007669"/>
    <property type="project" value="UniProtKB-KW"/>
</dbReference>
<dbReference type="Gene3D" id="2.40.50.140">
    <property type="entry name" value="Nucleic acid-binding proteins"/>
    <property type="match status" value="1"/>
</dbReference>
<dbReference type="HAMAP" id="MF_01959">
    <property type="entry name" value="CcmE"/>
    <property type="match status" value="1"/>
</dbReference>
<dbReference type="InterPro" id="IPR004329">
    <property type="entry name" value="CcmE"/>
</dbReference>
<dbReference type="InterPro" id="IPR036127">
    <property type="entry name" value="CcmE-like_sf"/>
</dbReference>
<dbReference type="InterPro" id="IPR012340">
    <property type="entry name" value="NA-bd_OB-fold"/>
</dbReference>
<dbReference type="NCBIfam" id="NF009727">
    <property type="entry name" value="PRK13254.1-1"/>
    <property type="match status" value="1"/>
</dbReference>
<dbReference type="NCBIfam" id="NF009731">
    <property type="entry name" value="PRK13254.1-5"/>
    <property type="match status" value="1"/>
</dbReference>
<dbReference type="PANTHER" id="PTHR34128">
    <property type="entry name" value="CYTOCHROME C-TYPE BIOGENESIS PROTEIN CCME HOMOLOG, MITOCHONDRIAL"/>
    <property type="match status" value="1"/>
</dbReference>
<dbReference type="PANTHER" id="PTHR34128:SF2">
    <property type="entry name" value="CYTOCHROME C-TYPE BIOGENESIS PROTEIN CCME HOMOLOG, MITOCHONDRIAL"/>
    <property type="match status" value="1"/>
</dbReference>
<dbReference type="Pfam" id="PF03100">
    <property type="entry name" value="CcmE"/>
    <property type="match status" value="1"/>
</dbReference>
<dbReference type="SUPFAM" id="SSF82093">
    <property type="entry name" value="Heme chaperone CcmE"/>
    <property type="match status" value="1"/>
</dbReference>
<evidence type="ECO:0000255" key="1">
    <source>
        <dbReference type="HAMAP-Rule" id="MF_01959"/>
    </source>
</evidence>
<evidence type="ECO:0000269" key="2">
    <source>
    </source>
</evidence>
<gene>
    <name evidence="1" type="primary">ccmE</name>
    <name evidence="1" type="synonym">cycJ</name>
    <name type="ordered locus">RCAP_rcc00554</name>
</gene>
<comment type="function">
    <text evidence="1 2">Heme chaperone required for the biogenesis of c-type cytochromes. Transiently binds heme delivered by CcmC and transfers the heme to apo-cytochromes in a process facilitated by CcmF and CcmH.</text>
</comment>
<comment type="subcellular location">
    <subcellularLocation>
        <location evidence="1">Cell inner membrane</location>
        <topology evidence="1">Single-pass type II membrane protein</topology>
        <orientation evidence="1">Periplasmic side</orientation>
    </subcellularLocation>
</comment>
<comment type="similarity">
    <text evidence="1">Belongs to the CcmE/CycJ family.</text>
</comment>
<proteinExistence type="evidence at protein level"/>
<keyword id="KW-0997">Cell inner membrane</keyword>
<keyword id="KW-1003">Cell membrane</keyword>
<keyword id="KW-0201">Cytochrome c-type biogenesis</keyword>
<keyword id="KW-0349">Heme</keyword>
<keyword id="KW-0408">Iron</keyword>
<keyword id="KW-0472">Membrane</keyword>
<keyword id="KW-0479">Metal-binding</keyword>
<keyword id="KW-1185">Reference proteome</keyword>
<keyword id="KW-0735">Signal-anchor</keyword>
<keyword id="KW-0812">Transmembrane</keyword>
<keyword id="KW-1133">Transmembrane helix</keyword>
<sequence>MRNLKKTRRIQILLVAGGALVLSTALIGYGMRDGINFFRAPSQIVAEPPAAGEVFRLGGLVEAGTLVRGQGEEITFKVTDGGASVPVTFTGVLPDLFGEGKGMVGTGEMVEGTFVAREILAKHDENYMPKEVTEALKEQGVYRDPAQPEG</sequence>
<reference key="1">
    <citation type="journal article" date="2000" name="Mol. Microbiol.">
        <title>Novel Rhodobacter capsulatus genes required for the biogenesis of various c-type cytochromes.</title>
        <authorList>
            <person name="Deshmukh M."/>
            <person name="Brasseur G."/>
            <person name="Daldal F."/>
        </authorList>
    </citation>
    <scope>NUCLEOTIDE SEQUENCE [GENOMIC DNA]</scope>
    <scope>FUNCTION</scope>
    <scope>MUTAGENESIS OF HIS-123</scope>
    <source>
        <strain>MT1131</strain>
    </source>
</reference>
<reference key="2">
    <citation type="journal article" date="2010" name="J. Bacteriol.">
        <title>Complete genome sequence of the photosynthetic purple nonsulfur bacterium Rhodobacter capsulatus SB 1003.</title>
        <authorList>
            <person name="Strnad H."/>
            <person name="Lapidus A."/>
            <person name="Paces J."/>
            <person name="Ulbrich P."/>
            <person name="Vlcek C."/>
            <person name="Paces V."/>
            <person name="Haselkorn R."/>
        </authorList>
    </citation>
    <scope>NUCLEOTIDE SEQUENCE [LARGE SCALE GENOMIC DNA]</scope>
    <source>
        <strain>ATCC BAA-309 / NBRC 16581 / SB1003</strain>
    </source>
</reference>